<gene>
    <name evidence="1" type="primary">htpX</name>
    <name type="ordered locus">SG1317</name>
</gene>
<dbReference type="EC" id="3.4.24.-" evidence="1"/>
<dbReference type="EMBL" id="AP008232">
    <property type="protein sequence ID" value="BAE74592.1"/>
    <property type="molecule type" value="Genomic_DNA"/>
</dbReference>
<dbReference type="RefSeq" id="WP_011411146.1">
    <property type="nucleotide sequence ID" value="NC_007712.1"/>
</dbReference>
<dbReference type="SMR" id="Q2NTD3"/>
<dbReference type="STRING" id="343509.SG1317"/>
<dbReference type="MEROPS" id="M48.002"/>
<dbReference type="KEGG" id="sgl:SG1317"/>
<dbReference type="eggNOG" id="COG0501">
    <property type="taxonomic scope" value="Bacteria"/>
</dbReference>
<dbReference type="HOGENOM" id="CLU_042266_1_0_6"/>
<dbReference type="OrthoDB" id="15218at2"/>
<dbReference type="Proteomes" id="UP000001932">
    <property type="component" value="Chromosome"/>
</dbReference>
<dbReference type="GO" id="GO:0005886">
    <property type="term" value="C:plasma membrane"/>
    <property type="evidence" value="ECO:0007669"/>
    <property type="project" value="UniProtKB-SubCell"/>
</dbReference>
<dbReference type="GO" id="GO:0004222">
    <property type="term" value="F:metalloendopeptidase activity"/>
    <property type="evidence" value="ECO:0007669"/>
    <property type="project" value="UniProtKB-UniRule"/>
</dbReference>
<dbReference type="GO" id="GO:0008270">
    <property type="term" value="F:zinc ion binding"/>
    <property type="evidence" value="ECO:0007669"/>
    <property type="project" value="UniProtKB-UniRule"/>
</dbReference>
<dbReference type="GO" id="GO:0006508">
    <property type="term" value="P:proteolysis"/>
    <property type="evidence" value="ECO:0007669"/>
    <property type="project" value="UniProtKB-KW"/>
</dbReference>
<dbReference type="CDD" id="cd07335">
    <property type="entry name" value="M48B_HtpX_like"/>
    <property type="match status" value="1"/>
</dbReference>
<dbReference type="FunFam" id="3.30.2010.10:FF:000001">
    <property type="entry name" value="Protease HtpX"/>
    <property type="match status" value="1"/>
</dbReference>
<dbReference type="Gene3D" id="3.30.2010.10">
    <property type="entry name" value="Metalloproteases ('zincins'), catalytic domain"/>
    <property type="match status" value="1"/>
</dbReference>
<dbReference type="HAMAP" id="MF_00188">
    <property type="entry name" value="Pept_M48_protease_HtpX"/>
    <property type="match status" value="1"/>
</dbReference>
<dbReference type="InterPro" id="IPR050083">
    <property type="entry name" value="HtpX_protease"/>
</dbReference>
<dbReference type="InterPro" id="IPR022919">
    <property type="entry name" value="Pept_M48_protease_HtpX"/>
</dbReference>
<dbReference type="InterPro" id="IPR001915">
    <property type="entry name" value="Peptidase_M48"/>
</dbReference>
<dbReference type="NCBIfam" id="NF003965">
    <property type="entry name" value="PRK05457.1"/>
    <property type="match status" value="1"/>
</dbReference>
<dbReference type="PANTHER" id="PTHR43221">
    <property type="entry name" value="PROTEASE HTPX"/>
    <property type="match status" value="1"/>
</dbReference>
<dbReference type="PANTHER" id="PTHR43221:SF1">
    <property type="entry name" value="PROTEASE HTPX"/>
    <property type="match status" value="1"/>
</dbReference>
<dbReference type="Pfam" id="PF01435">
    <property type="entry name" value="Peptidase_M48"/>
    <property type="match status" value="1"/>
</dbReference>
<proteinExistence type="inferred from homology"/>
<reference key="1">
    <citation type="journal article" date="2006" name="Genome Res.">
        <title>Massive genome erosion and functional adaptations provide insights into the symbiotic lifestyle of Sodalis glossinidius in the tsetse host.</title>
        <authorList>
            <person name="Toh H."/>
            <person name="Weiss B.L."/>
            <person name="Perkin S.A.H."/>
            <person name="Yamashita A."/>
            <person name="Oshima K."/>
            <person name="Hattori M."/>
            <person name="Aksoy S."/>
        </authorList>
    </citation>
    <scope>NUCLEOTIDE SEQUENCE [LARGE SCALE GENOMIC DNA]</scope>
    <source>
        <strain>morsitans</strain>
    </source>
</reference>
<organism>
    <name type="scientific">Sodalis glossinidius (strain morsitans)</name>
    <dbReference type="NCBI Taxonomy" id="343509"/>
    <lineage>
        <taxon>Bacteria</taxon>
        <taxon>Pseudomonadati</taxon>
        <taxon>Pseudomonadota</taxon>
        <taxon>Gammaproteobacteria</taxon>
        <taxon>Enterobacterales</taxon>
        <taxon>Bruguierivoracaceae</taxon>
        <taxon>Sodalis</taxon>
    </lineage>
</organism>
<comment type="cofactor">
    <cofactor evidence="1">
        <name>Zn(2+)</name>
        <dbReference type="ChEBI" id="CHEBI:29105"/>
    </cofactor>
    <text evidence="1">Binds 1 zinc ion per subunit.</text>
</comment>
<comment type="subcellular location">
    <subcellularLocation>
        <location evidence="1">Cell inner membrane</location>
        <topology evidence="1">Multi-pass membrane protein</topology>
    </subcellularLocation>
</comment>
<comment type="similarity">
    <text evidence="1">Belongs to the peptidase M48B family.</text>
</comment>
<sequence length="293" mass="31895">MMRISLFLLTNLAVMVVFGIVLSLTGIQSSSAAGLMIMAGLFGFGGAFVSLLMSKSMALRSVGGEVIEQPRNETERWLLNTVRQQAQQANITMPQVALYHAPDINAFATGARRDASLVAVSTGLLQNMNRDEAEAVIAHEISHIANGDMVTMTLIQGVVNTFVIFISRILAQLAAGFMSSGRDEGESGNGNPLVYFAVSMVLELVFGVLASIITLWFSRHREFHADAGSARLVGREKMIAALQRLKTSYEPQEASSMMAFCINGRNKTFSELFMSHPPLDKRIEALRSGAYLQ</sequence>
<accession>Q2NTD3</accession>
<feature type="chain" id="PRO_1000020947" description="Protease HtpX">
    <location>
        <begin position="1"/>
        <end position="293"/>
    </location>
</feature>
<feature type="transmembrane region" description="Helical" evidence="1">
    <location>
        <begin position="4"/>
        <end position="24"/>
    </location>
</feature>
<feature type="transmembrane region" description="Helical" evidence="1">
    <location>
        <begin position="33"/>
        <end position="53"/>
    </location>
</feature>
<feature type="transmembrane region" description="Helical" evidence="1">
    <location>
        <begin position="158"/>
        <end position="178"/>
    </location>
</feature>
<feature type="transmembrane region" description="Helical" evidence="1">
    <location>
        <begin position="193"/>
        <end position="213"/>
    </location>
</feature>
<feature type="active site" evidence="1">
    <location>
        <position position="140"/>
    </location>
</feature>
<feature type="binding site" evidence="1">
    <location>
        <position position="139"/>
    </location>
    <ligand>
        <name>Zn(2+)</name>
        <dbReference type="ChEBI" id="CHEBI:29105"/>
        <note>catalytic</note>
    </ligand>
</feature>
<feature type="binding site" evidence="1">
    <location>
        <position position="143"/>
    </location>
    <ligand>
        <name>Zn(2+)</name>
        <dbReference type="ChEBI" id="CHEBI:29105"/>
        <note>catalytic</note>
    </ligand>
</feature>
<feature type="binding site" evidence="1">
    <location>
        <position position="222"/>
    </location>
    <ligand>
        <name>Zn(2+)</name>
        <dbReference type="ChEBI" id="CHEBI:29105"/>
        <note>catalytic</note>
    </ligand>
</feature>
<name>HTPX_SODGM</name>
<keyword id="KW-0997">Cell inner membrane</keyword>
<keyword id="KW-1003">Cell membrane</keyword>
<keyword id="KW-0378">Hydrolase</keyword>
<keyword id="KW-0472">Membrane</keyword>
<keyword id="KW-0479">Metal-binding</keyword>
<keyword id="KW-0482">Metalloprotease</keyword>
<keyword id="KW-0645">Protease</keyword>
<keyword id="KW-0346">Stress response</keyword>
<keyword id="KW-0812">Transmembrane</keyword>
<keyword id="KW-1133">Transmembrane helix</keyword>
<keyword id="KW-0862">Zinc</keyword>
<evidence type="ECO:0000255" key="1">
    <source>
        <dbReference type="HAMAP-Rule" id="MF_00188"/>
    </source>
</evidence>
<protein>
    <recommendedName>
        <fullName evidence="1">Protease HtpX</fullName>
        <ecNumber evidence="1">3.4.24.-</ecNumber>
    </recommendedName>
    <alternativeName>
        <fullName evidence="1">Heat shock protein HtpX</fullName>
    </alternativeName>
</protein>